<feature type="chain" id="PRO_1000122522" description="Aspartyl/glutamyl-tRNA(Asn/Gln) amidotransferase subunit B">
    <location>
        <begin position="1"/>
        <end position="487"/>
    </location>
</feature>
<gene>
    <name evidence="1" type="primary">gatB</name>
    <name type="ordered locus">LEPBI_I2941</name>
</gene>
<proteinExistence type="inferred from homology"/>
<organism>
    <name type="scientific">Leptospira biflexa serovar Patoc (strain Patoc 1 / ATCC 23582 / Paris)</name>
    <dbReference type="NCBI Taxonomy" id="456481"/>
    <lineage>
        <taxon>Bacteria</taxon>
        <taxon>Pseudomonadati</taxon>
        <taxon>Spirochaetota</taxon>
        <taxon>Spirochaetia</taxon>
        <taxon>Leptospirales</taxon>
        <taxon>Leptospiraceae</taxon>
        <taxon>Leptospira</taxon>
    </lineage>
</organism>
<accession>B0SNZ7</accession>
<dbReference type="EC" id="6.3.5.-" evidence="1"/>
<dbReference type="EMBL" id="CP000786">
    <property type="protein sequence ID" value="ABZ99009.1"/>
    <property type="molecule type" value="Genomic_DNA"/>
</dbReference>
<dbReference type="RefSeq" id="WP_012389867.1">
    <property type="nucleotide sequence ID" value="NC_010602.1"/>
</dbReference>
<dbReference type="SMR" id="B0SNZ7"/>
<dbReference type="STRING" id="456481.LEPBI_I2941"/>
<dbReference type="KEGG" id="lbi:LEPBI_I2941"/>
<dbReference type="HOGENOM" id="CLU_019240_0_0_12"/>
<dbReference type="OrthoDB" id="9804078at2"/>
<dbReference type="BioCyc" id="LBIF456481:LEPBI_RS14415-MONOMER"/>
<dbReference type="Proteomes" id="UP000001847">
    <property type="component" value="Chromosome I"/>
</dbReference>
<dbReference type="GO" id="GO:0050566">
    <property type="term" value="F:asparaginyl-tRNA synthase (glutamine-hydrolyzing) activity"/>
    <property type="evidence" value="ECO:0007669"/>
    <property type="project" value="RHEA"/>
</dbReference>
<dbReference type="GO" id="GO:0005524">
    <property type="term" value="F:ATP binding"/>
    <property type="evidence" value="ECO:0007669"/>
    <property type="project" value="UniProtKB-KW"/>
</dbReference>
<dbReference type="GO" id="GO:0050567">
    <property type="term" value="F:glutaminyl-tRNA synthase (glutamine-hydrolyzing) activity"/>
    <property type="evidence" value="ECO:0007669"/>
    <property type="project" value="UniProtKB-UniRule"/>
</dbReference>
<dbReference type="GO" id="GO:0070681">
    <property type="term" value="P:glutaminyl-tRNAGln biosynthesis via transamidation"/>
    <property type="evidence" value="ECO:0007669"/>
    <property type="project" value="TreeGrafter"/>
</dbReference>
<dbReference type="GO" id="GO:0006412">
    <property type="term" value="P:translation"/>
    <property type="evidence" value="ECO:0007669"/>
    <property type="project" value="UniProtKB-UniRule"/>
</dbReference>
<dbReference type="FunFam" id="1.10.10.410:FF:000001">
    <property type="entry name" value="Aspartyl/glutamyl-tRNA(Asn/Gln) amidotransferase subunit B"/>
    <property type="match status" value="1"/>
</dbReference>
<dbReference type="FunFam" id="1.10.150.380:FF:000001">
    <property type="entry name" value="Aspartyl/glutamyl-tRNA(Asn/Gln) amidotransferase subunit B"/>
    <property type="match status" value="1"/>
</dbReference>
<dbReference type="Gene3D" id="1.10.10.410">
    <property type="match status" value="1"/>
</dbReference>
<dbReference type="Gene3D" id="1.10.150.380">
    <property type="entry name" value="GatB domain, N-terminal subdomain"/>
    <property type="match status" value="1"/>
</dbReference>
<dbReference type="HAMAP" id="MF_00121">
    <property type="entry name" value="GatB"/>
    <property type="match status" value="1"/>
</dbReference>
<dbReference type="InterPro" id="IPR017959">
    <property type="entry name" value="Asn/Gln-tRNA_amidoTrfase_suB/E"/>
</dbReference>
<dbReference type="InterPro" id="IPR006075">
    <property type="entry name" value="Asn/Gln-tRNA_Trfase_suB/E_cat"/>
</dbReference>
<dbReference type="InterPro" id="IPR018027">
    <property type="entry name" value="Asn/Gln_amidotransferase"/>
</dbReference>
<dbReference type="InterPro" id="IPR003789">
    <property type="entry name" value="Asn/Gln_tRNA_amidoTrase-B-like"/>
</dbReference>
<dbReference type="InterPro" id="IPR004413">
    <property type="entry name" value="GatB"/>
</dbReference>
<dbReference type="InterPro" id="IPR042114">
    <property type="entry name" value="GatB_C_1"/>
</dbReference>
<dbReference type="InterPro" id="IPR023168">
    <property type="entry name" value="GatB_Yqey_C_2"/>
</dbReference>
<dbReference type="InterPro" id="IPR017958">
    <property type="entry name" value="Gln-tRNA_amidoTrfase_suB_CS"/>
</dbReference>
<dbReference type="InterPro" id="IPR014746">
    <property type="entry name" value="Gln_synth/guanido_kin_cat_dom"/>
</dbReference>
<dbReference type="NCBIfam" id="TIGR00133">
    <property type="entry name" value="gatB"/>
    <property type="match status" value="1"/>
</dbReference>
<dbReference type="NCBIfam" id="NF004012">
    <property type="entry name" value="PRK05477.1-2"/>
    <property type="match status" value="1"/>
</dbReference>
<dbReference type="NCBIfam" id="NF004014">
    <property type="entry name" value="PRK05477.1-4"/>
    <property type="match status" value="1"/>
</dbReference>
<dbReference type="PANTHER" id="PTHR11659">
    <property type="entry name" value="GLUTAMYL-TRNA GLN AMIDOTRANSFERASE SUBUNIT B MITOCHONDRIAL AND PROKARYOTIC PET112-RELATED"/>
    <property type="match status" value="1"/>
</dbReference>
<dbReference type="PANTHER" id="PTHR11659:SF0">
    <property type="entry name" value="GLUTAMYL-TRNA(GLN) AMIDOTRANSFERASE SUBUNIT B, MITOCHONDRIAL"/>
    <property type="match status" value="1"/>
</dbReference>
<dbReference type="Pfam" id="PF02934">
    <property type="entry name" value="GatB_N"/>
    <property type="match status" value="1"/>
</dbReference>
<dbReference type="Pfam" id="PF02637">
    <property type="entry name" value="GatB_Yqey"/>
    <property type="match status" value="1"/>
</dbReference>
<dbReference type="SMART" id="SM00845">
    <property type="entry name" value="GatB_Yqey"/>
    <property type="match status" value="1"/>
</dbReference>
<dbReference type="SUPFAM" id="SSF89095">
    <property type="entry name" value="GatB/YqeY motif"/>
    <property type="match status" value="1"/>
</dbReference>
<dbReference type="SUPFAM" id="SSF55931">
    <property type="entry name" value="Glutamine synthetase/guanido kinase"/>
    <property type="match status" value="1"/>
</dbReference>
<dbReference type="PROSITE" id="PS01234">
    <property type="entry name" value="GATB"/>
    <property type="match status" value="1"/>
</dbReference>
<sequence>MEYEVIIGLEVHVQLNTNSKIFSTATNEFGGSPNTHISPLCVALPGTLPVLNEVVLEKAVRAGVALGCEITKFTKFDRKNYFYPDLPKGYQISQFDKPYATKGGIHVLLKGEKEEKFIPLTRIHMEEDAGKLIHSHDPSINRSYVDYNRAGTPLIEIVSEPDLRSSDEAYVYLNELKTILRYIQVSDCNMEEGSLRCDANVSIRPKGEKGFRTRVEIKNLNSFKAVKQAIDYEVEWQKDVYSRGESFKQMTKLWDATLLKTIPMRSKEMSHDYRYFPEPDLPTIQISDSFIEDIRKTLPELPRQKKERYKTELGLPEYDAEVLTSEREIAEYFEEALVIAGDAKKTSNWVKDEILGIVNKENISIQEFAIDPVRIGKLVKLINSGEITGKIAKTIFEDMLTTKDQPETIVEKNGLKVVRDDKALEEIVIRVIESQPESVEGWKNGKDRVLGAIVGGVMKETKGKADPKLVNELILAKLGPLGEKKKV</sequence>
<name>GATB_LEPBP</name>
<protein>
    <recommendedName>
        <fullName evidence="1">Aspartyl/glutamyl-tRNA(Asn/Gln) amidotransferase subunit B</fullName>
        <shortName evidence="1">Asp/Glu-ADT subunit B</shortName>
        <ecNumber evidence="1">6.3.5.-</ecNumber>
    </recommendedName>
</protein>
<comment type="function">
    <text evidence="1">Allows the formation of correctly charged Asn-tRNA(Asn) or Gln-tRNA(Gln) through the transamidation of misacylated Asp-tRNA(Asn) or Glu-tRNA(Gln) in organisms which lack either or both of asparaginyl-tRNA or glutaminyl-tRNA synthetases. The reaction takes place in the presence of glutamine and ATP through an activated phospho-Asp-tRNA(Asn) or phospho-Glu-tRNA(Gln).</text>
</comment>
<comment type="catalytic activity">
    <reaction evidence="1">
        <text>L-glutamyl-tRNA(Gln) + L-glutamine + ATP + H2O = L-glutaminyl-tRNA(Gln) + L-glutamate + ADP + phosphate + H(+)</text>
        <dbReference type="Rhea" id="RHEA:17521"/>
        <dbReference type="Rhea" id="RHEA-COMP:9681"/>
        <dbReference type="Rhea" id="RHEA-COMP:9684"/>
        <dbReference type="ChEBI" id="CHEBI:15377"/>
        <dbReference type="ChEBI" id="CHEBI:15378"/>
        <dbReference type="ChEBI" id="CHEBI:29985"/>
        <dbReference type="ChEBI" id="CHEBI:30616"/>
        <dbReference type="ChEBI" id="CHEBI:43474"/>
        <dbReference type="ChEBI" id="CHEBI:58359"/>
        <dbReference type="ChEBI" id="CHEBI:78520"/>
        <dbReference type="ChEBI" id="CHEBI:78521"/>
        <dbReference type="ChEBI" id="CHEBI:456216"/>
    </reaction>
</comment>
<comment type="catalytic activity">
    <reaction evidence="1">
        <text>L-aspartyl-tRNA(Asn) + L-glutamine + ATP + H2O = L-asparaginyl-tRNA(Asn) + L-glutamate + ADP + phosphate + 2 H(+)</text>
        <dbReference type="Rhea" id="RHEA:14513"/>
        <dbReference type="Rhea" id="RHEA-COMP:9674"/>
        <dbReference type="Rhea" id="RHEA-COMP:9677"/>
        <dbReference type="ChEBI" id="CHEBI:15377"/>
        <dbReference type="ChEBI" id="CHEBI:15378"/>
        <dbReference type="ChEBI" id="CHEBI:29985"/>
        <dbReference type="ChEBI" id="CHEBI:30616"/>
        <dbReference type="ChEBI" id="CHEBI:43474"/>
        <dbReference type="ChEBI" id="CHEBI:58359"/>
        <dbReference type="ChEBI" id="CHEBI:78515"/>
        <dbReference type="ChEBI" id="CHEBI:78516"/>
        <dbReference type="ChEBI" id="CHEBI:456216"/>
    </reaction>
</comment>
<comment type="subunit">
    <text evidence="1">Heterotrimer of A, B and C subunits.</text>
</comment>
<comment type="similarity">
    <text evidence="1">Belongs to the GatB/GatE family. GatB subfamily.</text>
</comment>
<evidence type="ECO:0000255" key="1">
    <source>
        <dbReference type="HAMAP-Rule" id="MF_00121"/>
    </source>
</evidence>
<reference key="1">
    <citation type="journal article" date="2008" name="PLoS ONE">
        <title>Genome sequence of the saprophyte Leptospira biflexa provides insights into the evolution of Leptospira and the pathogenesis of leptospirosis.</title>
        <authorList>
            <person name="Picardeau M."/>
            <person name="Bulach D.M."/>
            <person name="Bouchier C."/>
            <person name="Zuerner R.L."/>
            <person name="Zidane N."/>
            <person name="Wilson P.J."/>
            <person name="Creno S."/>
            <person name="Kuczek E.S."/>
            <person name="Bommezzadri S."/>
            <person name="Davis J.C."/>
            <person name="McGrath A."/>
            <person name="Johnson M.J."/>
            <person name="Boursaux-Eude C."/>
            <person name="Seemann T."/>
            <person name="Rouy Z."/>
            <person name="Coppel R.L."/>
            <person name="Rood J.I."/>
            <person name="Lajus A."/>
            <person name="Davies J.K."/>
            <person name="Medigue C."/>
            <person name="Adler B."/>
        </authorList>
    </citation>
    <scope>NUCLEOTIDE SEQUENCE [LARGE SCALE GENOMIC DNA]</scope>
    <source>
        <strain>Patoc 1 / ATCC 23582 / Paris</strain>
    </source>
</reference>
<keyword id="KW-0067">ATP-binding</keyword>
<keyword id="KW-0436">Ligase</keyword>
<keyword id="KW-0547">Nucleotide-binding</keyword>
<keyword id="KW-0648">Protein biosynthesis</keyword>
<keyword id="KW-1185">Reference proteome</keyword>